<dbReference type="EMBL" id="AB013389">
    <property type="protein sequence ID" value="BAB10930.1"/>
    <property type="molecule type" value="Genomic_DNA"/>
</dbReference>
<dbReference type="EMBL" id="CP002688">
    <property type="protein sequence ID" value="AED98227.1"/>
    <property type="molecule type" value="Genomic_DNA"/>
</dbReference>
<dbReference type="EMBL" id="CP002688">
    <property type="protein sequence ID" value="ANM71175.1"/>
    <property type="molecule type" value="Genomic_DNA"/>
</dbReference>
<dbReference type="EMBL" id="AF389279">
    <property type="protein sequence ID" value="AAK63852.1"/>
    <property type="molecule type" value="mRNA"/>
</dbReference>
<dbReference type="EMBL" id="AY149928">
    <property type="protein sequence ID" value="AAN31082.1"/>
    <property type="molecule type" value="mRNA"/>
</dbReference>
<dbReference type="RefSeq" id="NP_001332723.1">
    <property type="nucleotide sequence ID" value="NM_001345767.1"/>
</dbReference>
<dbReference type="RefSeq" id="NP_569037.1">
    <property type="nucleotide sequence ID" value="NM_126052.3"/>
</dbReference>
<dbReference type="SMR" id="Q9FJY5"/>
<dbReference type="FunCoup" id="Q9FJY5">
    <property type="interactions" value="3111"/>
</dbReference>
<dbReference type="STRING" id="3702.Q9FJY5"/>
<dbReference type="iPTMnet" id="Q9FJY5"/>
<dbReference type="PaxDb" id="3702-AT5G66540.1"/>
<dbReference type="ProteomicsDB" id="183581"/>
<dbReference type="EnsemblPlants" id="AT5G66540.1">
    <property type="protein sequence ID" value="AT5G66540.1"/>
    <property type="gene ID" value="AT5G66540"/>
</dbReference>
<dbReference type="EnsemblPlants" id="AT5G66540.2">
    <property type="protein sequence ID" value="AT5G66540.2"/>
    <property type="gene ID" value="AT5G66540"/>
</dbReference>
<dbReference type="GeneID" id="836786"/>
<dbReference type="Gramene" id="AT5G66540.1">
    <property type="protein sequence ID" value="AT5G66540.1"/>
    <property type="gene ID" value="AT5G66540"/>
</dbReference>
<dbReference type="Gramene" id="AT5G66540.2">
    <property type="protein sequence ID" value="AT5G66540.2"/>
    <property type="gene ID" value="AT5G66540"/>
</dbReference>
<dbReference type="KEGG" id="ath:AT5G66540"/>
<dbReference type="Araport" id="AT5G66540"/>
<dbReference type="TAIR" id="AT5G66540"/>
<dbReference type="eggNOG" id="KOG2600">
    <property type="taxonomic scope" value="Eukaryota"/>
</dbReference>
<dbReference type="HOGENOM" id="CLU_011271_5_1_1"/>
<dbReference type="InParanoid" id="Q9FJY5"/>
<dbReference type="OMA" id="HFAEDFG"/>
<dbReference type="PhylomeDB" id="Q9FJY5"/>
<dbReference type="CD-CODE" id="4299E36E">
    <property type="entry name" value="Nucleolus"/>
</dbReference>
<dbReference type="PRO" id="PR:Q9FJY5"/>
<dbReference type="Proteomes" id="UP000006548">
    <property type="component" value="Chromosome 5"/>
</dbReference>
<dbReference type="ExpressionAtlas" id="Q9FJY5">
    <property type="expression patterns" value="baseline and differential"/>
</dbReference>
<dbReference type="GO" id="GO:0034457">
    <property type="term" value="C:Mpp10 complex"/>
    <property type="evidence" value="ECO:0007669"/>
    <property type="project" value="InterPro"/>
</dbReference>
<dbReference type="GO" id="GO:0005730">
    <property type="term" value="C:nucleolus"/>
    <property type="evidence" value="ECO:0007005"/>
    <property type="project" value="TAIR"/>
</dbReference>
<dbReference type="GO" id="GO:0005732">
    <property type="term" value="C:sno(s)RNA-containing ribonucleoprotein complex"/>
    <property type="evidence" value="ECO:0007669"/>
    <property type="project" value="InterPro"/>
</dbReference>
<dbReference type="GO" id="GO:0003729">
    <property type="term" value="F:mRNA binding"/>
    <property type="evidence" value="ECO:0000314"/>
    <property type="project" value="TAIR"/>
</dbReference>
<dbReference type="GO" id="GO:0006364">
    <property type="term" value="P:rRNA processing"/>
    <property type="evidence" value="ECO:0007669"/>
    <property type="project" value="UniProtKB-KW"/>
</dbReference>
<dbReference type="InterPro" id="IPR012173">
    <property type="entry name" value="Mpp10"/>
</dbReference>
<dbReference type="PANTHER" id="PTHR17039">
    <property type="entry name" value="U3 SMALL NUCLEOLAR RIBONUCLEOPROTEIN PROTEIN MPP10"/>
    <property type="match status" value="1"/>
</dbReference>
<dbReference type="PANTHER" id="PTHR17039:SF0">
    <property type="entry name" value="U3 SMALL NUCLEOLAR RIBONUCLEOPROTEIN PROTEIN MPP10"/>
    <property type="match status" value="1"/>
</dbReference>
<dbReference type="Pfam" id="PF04006">
    <property type="entry name" value="Mpp10"/>
    <property type="match status" value="1"/>
</dbReference>
<dbReference type="PIRSF" id="PIRSF017300">
    <property type="entry name" value="snoRNP_Mpp10"/>
    <property type="match status" value="1"/>
</dbReference>
<evidence type="ECO:0000250" key="1">
    <source>
        <dbReference type="UniProtKB" id="P47083"/>
    </source>
</evidence>
<evidence type="ECO:0000255" key="2"/>
<evidence type="ECO:0000255" key="3">
    <source>
        <dbReference type="PIRNR" id="PIRNR017300"/>
    </source>
</evidence>
<evidence type="ECO:0000255" key="4">
    <source>
        <dbReference type="PROSITE-ProRule" id="PRU00768"/>
    </source>
</evidence>
<evidence type="ECO:0000256" key="5">
    <source>
        <dbReference type="SAM" id="MobiDB-lite"/>
    </source>
</evidence>
<evidence type="ECO:0000269" key="6">
    <source>
    </source>
</evidence>
<evidence type="ECO:0000269" key="7">
    <source>
    </source>
</evidence>
<evidence type="ECO:0000303" key="8">
    <source>
    </source>
</evidence>
<evidence type="ECO:0000305" key="9"/>
<evidence type="ECO:0000312" key="10">
    <source>
        <dbReference type="Araport" id="AT5G66540"/>
    </source>
</evidence>
<evidence type="ECO:0000312" key="11">
    <source>
        <dbReference type="EMBL" id="BAB10930.1"/>
    </source>
</evidence>
<feature type="chain" id="PRO_0000454730" description="M phase phosphoprotein 10">
    <location>
        <begin position="1"/>
        <end position="524"/>
    </location>
</feature>
<feature type="region of interest" description="Disordered" evidence="5">
    <location>
        <begin position="100"/>
        <end position="243"/>
    </location>
</feature>
<feature type="region of interest" description="Disordered" evidence="5">
    <location>
        <begin position="259"/>
        <end position="283"/>
    </location>
</feature>
<feature type="region of interest" description="Disordered" evidence="5">
    <location>
        <begin position="479"/>
        <end position="524"/>
    </location>
</feature>
<feature type="coiled-coil region" evidence="2">
    <location>
        <begin position="131"/>
        <end position="165"/>
    </location>
</feature>
<feature type="coiled-coil region" evidence="2">
    <location>
        <begin position="257"/>
        <end position="302"/>
    </location>
</feature>
<feature type="short sequence motif" description="Nuclear localization signal 1" evidence="4">
    <location>
        <begin position="85"/>
        <end position="92"/>
    </location>
</feature>
<feature type="short sequence motif" description="Nuclear localization signal 2" evidence="4">
    <location>
        <begin position="373"/>
        <end position="380"/>
    </location>
</feature>
<feature type="compositionally biased region" description="Acidic residues" evidence="5">
    <location>
        <begin position="109"/>
        <end position="168"/>
    </location>
</feature>
<feature type="compositionally biased region" description="Basic and acidic residues" evidence="5">
    <location>
        <begin position="169"/>
        <end position="180"/>
    </location>
</feature>
<feature type="compositionally biased region" description="Acidic residues" evidence="5">
    <location>
        <begin position="181"/>
        <end position="191"/>
    </location>
</feature>
<feature type="compositionally biased region" description="Basic residues" evidence="5">
    <location>
        <begin position="196"/>
        <end position="207"/>
    </location>
</feature>
<feature type="compositionally biased region" description="Acidic residues" evidence="5">
    <location>
        <begin position="210"/>
        <end position="238"/>
    </location>
</feature>
<feature type="compositionally biased region" description="Basic and acidic residues" evidence="5">
    <location>
        <begin position="271"/>
        <end position="283"/>
    </location>
</feature>
<feature type="compositionally biased region" description="Basic and acidic residues" evidence="5">
    <location>
        <begin position="480"/>
        <end position="493"/>
    </location>
</feature>
<feature type="compositionally biased region" description="Basic residues" evidence="5">
    <location>
        <begin position="494"/>
        <end position="504"/>
    </location>
</feature>
<feature type="compositionally biased region" description="Basic and acidic residues" evidence="5">
    <location>
        <begin position="505"/>
        <end position="517"/>
    </location>
</feature>
<gene>
    <name evidence="8" type="primary">MPP10</name>
    <name evidence="10" type="ordered locus">At5g66540</name>
    <name evidence="11" type="ORF">K1F13.21</name>
</gene>
<protein>
    <recommendedName>
        <fullName evidence="8">M phase phosphoprotein 10</fullName>
        <shortName evidence="8">AtMPP10</shortName>
    </recommendedName>
    <alternativeName>
        <fullName evidence="3">U3 small nucleolar ribonucleoprotein protein MPP10</fullName>
    </alternativeName>
</protein>
<name>MPP10_ARATH</name>
<sequence>MATVKDSGFEALEKLKATEPPVFLAPSSISEDARSASQYLFMKLKPHNPKCPFDQLSSDGFDAEQIWQQIDMQSQPLLTSLRQEVKRFAKNPEEIRKLGKLALKVSHEDDIDEMDMDGFDSDDVDDEDKEIESNDSEGEDEEEEEEDEEEEEEEEEEEEEEKDGDNEGIEDKFFKIKELEEFLEEGEAEEYGIDHKNKKGVAQRKKQNLSDDEDEEDDDDEEEDVEFDAFAGGDDEETDKLGKARYDDFFGGKKETKMKLKDLSEDEEAEIENKGNEKLSTHERARLKLQSKIEQMEKANLDPKHWTMQGEITAAKRPMNSALEVDLDFEHNARPAPVITEEVTASLEDLIKSRIIEARFDDVQRAPRLPTKGKREAKELDESKSKKGLAEVYEAEYFQKANPAFAPTTHSDELKKEASMLFKKLCLKLDALSHFHFTPKPVIEEMSIPNVSAIAMEEVAPVAVSDAAMLAPEEIFSGKGDIKDESELTQEDRKRRRANKKRKFKAESANEPPKKALDTSTKNP</sequence>
<organism>
    <name type="scientific">Arabidopsis thaliana</name>
    <name type="common">Mouse-ear cress</name>
    <dbReference type="NCBI Taxonomy" id="3702"/>
    <lineage>
        <taxon>Eukaryota</taxon>
        <taxon>Viridiplantae</taxon>
        <taxon>Streptophyta</taxon>
        <taxon>Embryophyta</taxon>
        <taxon>Tracheophyta</taxon>
        <taxon>Spermatophyta</taxon>
        <taxon>Magnoliopsida</taxon>
        <taxon>eudicotyledons</taxon>
        <taxon>Gunneridae</taxon>
        <taxon>Pentapetalae</taxon>
        <taxon>rosids</taxon>
        <taxon>malvids</taxon>
        <taxon>Brassicales</taxon>
        <taxon>Brassicaceae</taxon>
        <taxon>Camelineae</taxon>
        <taxon>Arabidopsis</taxon>
    </lineage>
</organism>
<proteinExistence type="evidence at protein level"/>
<keyword id="KW-0175">Coiled coil</keyword>
<keyword id="KW-0539">Nucleus</keyword>
<keyword id="KW-1185">Reference proteome</keyword>
<keyword id="KW-0687">Ribonucleoprotein</keyword>
<keyword id="KW-0690">Ribosome biogenesis</keyword>
<keyword id="KW-0698">rRNA processing</keyword>
<accession>Q9FJY5</accession>
<comment type="function">
    <text evidence="1">Involved in nucleolar processing of pre-18S ribosomal RNA.</text>
</comment>
<comment type="subunit">
    <text evidence="1 6">Component of the ribosomal small subunit (SSU) processome (By similarity). Interacts with THAL in the nucleus (PubMed:27792779).</text>
</comment>
<comment type="subcellular location">
    <subcellularLocation>
        <location evidence="4">Nucleus</location>
    </subcellularLocation>
    <subcellularLocation>
        <location evidence="6">Nucleus</location>
        <location evidence="6">Nucleolus</location>
    </subcellularLocation>
</comment>
<comment type="induction">
    <text evidence="7">By salt stress.</text>
</comment>
<comment type="similarity">
    <text evidence="9">Belongs to the MPP10 family.</text>
</comment>
<reference key="1">
    <citation type="journal article" date="1998" name="DNA Res.">
        <title>Structural analysis of Arabidopsis thaliana chromosome 5. VI. Sequence features of the regions of 1,367,185 bp covered by 19 physically assigned P1 and TAC clones.</title>
        <authorList>
            <person name="Kotani H."/>
            <person name="Nakamura Y."/>
            <person name="Sato S."/>
            <person name="Asamizu E."/>
            <person name="Kaneko T."/>
            <person name="Miyajima N."/>
            <person name="Tabata S."/>
        </authorList>
    </citation>
    <scope>NUCLEOTIDE SEQUENCE [LARGE SCALE GENOMIC DNA]</scope>
    <source>
        <strain>cv. Columbia</strain>
    </source>
</reference>
<reference key="2">
    <citation type="journal article" date="2017" name="Plant J.">
        <title>Araport11: a complete reannotation of the Arabidopsis thaliana reference genome.</title>
        <authorList>
            <person name="Cheng C.Y."/>
            <person name="Krishnakumar V."/>
            <person name="Chan A.P."/>
            <person name="Thibaud-Nissen F."/>
            <person name="Schobel S."/>
            <person name="Town C.D."/>
        </authorList>
    </citation>
    <scope>GENOME REANNOTATION</scope>
    <source>
        <strain>cv. Columbia</strain>
    </source>
</reference>
<reference key="3">
    <citation type="journal article" date="2003" name="Science">
        <title>Empirical analysis of transcriptional activity in the Arabidopsis genome.</title>
        <authorList>
            <person name="Yamada K."/>
            <person name="Lim J."/>
            <person name="Dale J.M."/>
            <person name="Chen H."/>
            <person name="Shinn P."/>
            <person name="Palm C.J."/>
            <person name="Southwick A.M."/>
            <person name="Wu H.C."/>
            <person name="Kim C.J."/>
            <person name="Nguyen M."/>
            <person name="Pham P.K."/>
            <person name="Cheuk R.F."/>
            <person name="Karlin-Newmann G."/>
            <person name="Liu S.X."/>
            <person name="Lam B."/>
            <person name="Sakano H."/>
            <person name="Wu T."/>
            <person name="Yu G."/>
            <person name="Miranda M."/>
            <person name="Quach H.L."/>
            <person name="Tripp M."/>
            <person name="Chang C.H."/>
            <person name="Lee J.M."/>
            <person name="Toriumi M.J."/>
            <person name="Chan M.M."/>
            <person name="Tang C.C."/>
            <person name="Onodera C.S."/>
            <person name="Deng J.M."/>
            <person name="Akiyama K."/>
            <person name="Ansari Y."/>
            <person name="Arakawa T."/>
            <person name="Banh J."/>
            <person name="Banno F."/>
            <person name="Bowser L."/>
            <person name="Brooks S.Y."/>
            <person name="Carninci P."/>
            <person name="Chao Q."/>
            <person name="Choy N."/>
            <person name="Enju A."/>
            <person name="Goldsmith A.D."/>
            <person name="Gurjal M."/>
            <person name="Hansen N.F."/>
            <person name="Hayashizaki Y."/>
            <person name="Johnson-Hopson C."/>
            <person name="Hsuan V.W."/>
            <person name="Iida K."/>
            <person name="Karnes M."/>
            <person name="Khan S."/>
            <person name="Koesema E."/>
            <person name="Ishida J."/>
            <person name="Jiang P.X."/>
            <person name="Jones T."/>
            <person name="Kawai J."/>
            <person name="Kamiya A."/>
            <person name="Meyers C."/>
            <person name="Nakajima M."/>
            <person name="Narusaka M."/>
            <person name="Seki M."/>
            <person name="Sakurai T."/>
            <person name="Satou M."/>
            <person name="Tamse R."/>
            <person name="Vaysberg M."/>
            <person name="Wallender E.K."/>
            <person name="Wong C."/>
            <person name="Yamamura Y."/>
            <person name="Yuan S."/>
            <person name="Shinozaki K."/>
            <person name="Davis R.W."/>
            <person name="Theologis A."/>
            <person name="Ecker J.R."/>
        </authorList>
    </citation>
    <scope>NUCLEOTIDE SEQUENCE [LARGE SCALE MRNA]</scope>
    <source>
        <strain>cv. Columbia</strain>
    </source>
</reference>
<reference key="4">
    <citation type="journal article" date="2008" name="J. Proteome Res.">
        <title>Site-specific phosphorylation profiling of Arabidopsis proteins by mass spectrometry and peptide chip analysis.</title>
        <authorList>
            <person name="de la Fuente van Bentem S."/>
            <person name="Anrather D."/>
            <person name="Dohnal I."/>
            <person name="Roitinger E."/>
            <person name="Csaszar E."/>
            <person name="Joore J."/>
            <person name="Buijnink J."/>
            <person name="Carreri A."/>
            <person name="Forzani C."/>
            <person name="Lorkovic Z.J."/>
            <person name="Barta A."/>
            <person name="Lecourieux D."/>
            <person name="Verhounig A."/>
            <person name="Jonak C."/>
            <person name="Hirt H."/>
        </authorList>
    </citation>
    <scope>IDENTIFICATION BY MASS SPECTROMETRY [LARGE SCALE ANALYSIS]</scope>
</reference>
<reference key="5">
    <citation type="journal article" date="2009" name="J. Proteomics">
        <title>Phosphoproteomic analysis of nuclei-enriched fractions from Arabidopsis thaliana.</title>
        <authorList>
            <person name="Jones A.M.E."/>
            <person name="MacLean D."/>
            <person name="Studholme D.J."/>
            <person name="Serna-Sanz A."/>
            <person name="Andreasson E."/>
            <person name="Rathjen J.P."/>
            <person name="Peck S.C."/>
        </authorList>
    </citation>
    <scope>IDENTIFICATION BY MASS SPECTROMETRY [LARGE SCALE ANALYSIS]</scope>
</reference>
<reference key="6">
    <citation type="journal article" date="2009" name="Plant Physiol.">
        <title>Large-scale Arabidopsis phosphoproteome profiling reveals novel chloroplast kinase substrates and phosphorylation networks.</title>
        <authorList>
            <person name="Reiland S."/>
            <person name="Messerli G."/>
            <person name="Baerenfaller K."/>
            <person name="Gerrits B."/>
            <person name="Endler A."/>
            <person name="Grossmann J."/>
            <person name="Gruissem W."/>
            <person name="Baginsky S."/>
        </authorList>
    </citation>
    <scope>IDENTIFICATION BY MASS SPECTROMETRY [LARGE SCALE ANALYSIS]</scope>
</reference>
<reference key="7">
    <citation type="journal article" date="2016" name="PLoS Genet.">
        <title>Dual role of a SAS10/C1D family protein in ribosomal RNA gene expression and processing is essential for reproduction in Arabidopsis thaliana.</title>
        <authorList>
            <person name="Chen Y.-J.C."/>
            <person name="Wang H.-J."/>
            <person name="Jauh G.-Y."/>
        </authorList>
    </citation>
    <scope>SUBCELLULAR LOCATION</scope>
    <scope>INTERACTION WITH THAL</scope>
    <source>
        <strain>cv. Columbia</strain>
    </source>
</reference>
<reference key="8">
    <citation type="journal article" date="2018" name="BMC Plant Biol.">
        <title>Salt hypersensitive mutant 9, a nucleolar APUM23 protein, is essential for salt sensitivity in association with the ABA signaling pathway in Arabidopsis.</title>
        <authorList>
            <person name="Huang K.-C."/>
            <person name="Lin W.-C."/>
            <person name="Cheng W.-H."/>
        </authorList>
    </citation>
    <scope>INDUCTION BY SALT STRESS</scope>
    <source>
        <strain>cv. Columbia</strain>
    </source>
</reference>